<dbReference type="EMBL" id="CP000548">
    <property type="protein sequence ID" value="ABO04072.1"/>
    <property type="status" value="ALT_INIT"/>
    <property type="molecule type" value="Genomic_DNA"/>
</dbReference>
<dbReference type="SMR" id="A3ML57"/>
<dbReference type="KEGG" id="bmn:BMA10247_1446"/>
<dbReference type="GO" id="GO:0005829">
    <property type="term" value="C:cytosol"/>
    <property type="evidence" value="ECO:0007669"/>
    <property type="project" value="TreeGrafter"/>
</dbReference>
<dbReference type="GO" id="GO:0005524">
    <property type="term" value="F:ATP binding"/>
    <property type="evidence" value="ECO:0007669"/>
    <property type="project" value="UniProtKB-UniRule"/>
</dbReference>
<dbReference type="GO" id="GO:0140664">
    <property type="term" value="F:ATP-dependent DNA damage sensor activity"/>
    <property type="evidence" value="ECO:0007669"/>
    <property type="project" value="InterPro"/>
</dbReference>
<dbReference type="GO" id="GO:0003684">
    <property type="term" value="F:damaged DNA binding"/>
    <property type="evidence" value="ECO:0007669"/>
    <property type="project" value="UniProtKB-UniRule"/>
</dbReference>
<dbReference type="GO" id="GO:0030983">
    <property type="term" value="F:mismatched DNA binding"/>
    <property type="evidence" value="ECO:0007669"/>
    <property type="project" value="InterPro"/>
</dbReference>
<dbReference type="GO" id="GO:0006298">
    <property type="term" value="P:mismatch repair"/>
    <property type="evidence" value="ECO:0007669"/>
    <property type="project" value="UniProtKB-UniRule"/>
</dbReference>
<dbReference type="CDD" id="cd03284">
    <property type="entry name" value="ABC_MutS1"/>
    <property type="match status" value="1"/>
</dbReference>
<dbReference type="FunFam" id="3.40.1170.10:FF:000001">
    <property type="entry name" value="DNA mismatch repair protein MutS"/>
    <property type="match status" value="1"/>
</dbReference>
<dbReference type="FunFam" id="3.40.50.300:FF:000870">
    <property type="entry name" value="MutS protein homolog 4"/>
    <property type="match status" value="1"/>
</dbReference>
<dbReference type="Gene3D" id="1.10.1420.10">
    <property type="match status" value="2"/>
</dbReference>
<dbReference type="Gene3D" id="6.10.140.430">
    <property type="match status" value="1"/>
</dbReference>
<dbReference type="Gene3D" id="3.40.1170.10">
    <property type="entry name" value="DNA repair protein MutS, domain I"/>
    <property type="match status" value="1"/>
</dbReference>
<dbReference type="Gene3D" id="3.30.420.110">
    <property type="entry name" value="MutS, connector domain"/>
    <property type="match status" value="1"/>
</dbReference>
<dbReference type="Gene3D" id="3.40.50.300">
    <property type="entry name" value="P-loop containing nucleotide triphosphate hydrolases"/>
    <property type="match status" value="1"/>
</dbReference>
<dbReference type="HAMAP" id="MF_00096">
    <property type="entry name" value="MutS"/>
    <property type="match status" value="1"/>
</dbReference>
<dbReference type="InterPro" id="IPR005748">
    <property type="entry name" value="DNA_mismatch_repair_MutS"/>
</dbReference>
<dbReference type="InterPro" id="IPR007695">
    <property type="entry name" value="DNA_mismatch_repair_MutS-lik_N"/>
</dbReference>
<dbReference type="InterPro" id="IPR017261">
    <property type="entry name" value="DNA_mismatch_repair_MutS/MSH"/>
</dbReference>
<dbReference type="InterPro" id="IPR000432">
    <property type="entry name" value="DNA_mismatch_repair_MutS_C"/>
</dbReference>
<dbReference type="InterPro" id="IPR007861">
    <property type="entry name" value="DNA_mismatch_repair_MutS_clamp"/>
</dbReference>
<dbReference type="InterPro" id="IPR007696">
    <property type="entry name" value="DNA_mismatch_repair_MutS_core"/>
</dbReference>
<dbReference type="InterPro" id="IPR016151">
    <property type="entry name" value="DNA_mismatch_repair_MutS_N"/>
</dbReference>
<dbReference type="InterPro" id="IPR036187">
    <property type="entry name" value="DNA_mismatch_repair_MutS_sf"/>
</dbReference>
<dbReference type="InterPro" id="IPR007860">
    <property type="entry name" value="DNA_mmatch_repair_MutS_con_dom"/>
</dbReference>
<dbReference type="InterPro" id="IPR045076">
    <property type="entry name" value="MutS"/>
</dbReference>
<dbReference type="InterPro" id="IPR036678">
    <property type="entry name" value="MutS_con_dom_sf"/>
</dbReference>
<dbReference type="InterPro" id="IPR027417">
    <property type="entry name" value="P-loop_NTPase"/>
</dbReference>
<dbReference type="NCBIfam" id="TIGR01070">
    <property type="entry name" value="mutS1"/>
    <property type="match status" value="1"/>
</dbReference>
<dbReference type="NCBIfam" id="NF003810">
    <property type="entry name" value="PRK05399.1"/>
    <property type="match status" value="1"/>
</dbReference>
<dbReference type="PANTHER" id="PTHR11361:SF34">
    <property type="entry name" value="DNA MISMATCH REPAIR PROTEIN MSH1, MITOCHONDRIAL"/>
    <property type="match status" value="1"/>
</dbReference>
<dbReference type="PANTHER" id="PTHR11361">
    <property type="entry name" value="DNA MISMATCH REPAIR PROTEIN MUTS FAMILY MEMBER"/>
    <property type="match status" value="1"/>
</dbReference>
<dbReference type="Pfam" id="PF01624">
    <property type="entry name" value="MutS_I"/>
    <property type="match status" value="1"/>
</dbReference>
<dbReference type="Pfam" id="PF05188">
    <property type="entry name" value="MutS_II"/>
    <property type="match status" value="1"/>
</dbReference>
<dbReference type="Pfam" id="PF05192">
    <property type="entry name" value="MutS_III"/>
    <property type="match status" value="1"/>
</dbReference>
<dbReference type="Pfam" id="PF05190">
    <property type="entry name" value="MutS_IV"/>
    <property type="match status" value="1"/>
</dbReference>
<dbReference type="Pfam" id="PF00488">
    <property type="entry name" value="MutS_V"/>
    <property type="match status" value="1"/>
</dbReference>
<dbReference type="PIRSF" id="PIRSF037677">
    <property type="entry name" value="DNA_mis_repair_Msh6"/>
    <property type="match status" value="1"/>
</dbReference>
<dbReference type="SMART" id="SM00534">
    <property type="entry name" value="MUTSac"/>
    <property type="match status" value="1"/>
</dbReference>
<dbReference type="SMART" id="SM00533">
    <property type="entry name" value="MUTSd"/>
    <property type="match status" value="1"/>
</dbReference>
<dbReference type="SUPFAM" id="SSF55271">
    <property type="entry name" value="DNA repair protein MutS, domain I"/>
    <property type="match status" value="1"/>
</dbReference>
<dbReference type="SUPFAM" id="SSF53150">
    <property type="entry name" value="DNA repair protein MutS, domain II"/>
    <property type="match status" value="1"/>
</dbReference>
<dbReference type="SUPFAM" id="SSF48334">
    <property type="entry name" value="DNA repair protein MutS, domain III"/>
    <property type="match status" value="1"/>
</dbReference>
<dbReference type="SUPFAM" id="SSF52540">
    <property type="entry name" value="P-loop containing nucleoside triphosphate hydrolases"/>
    <property type="match status" value="1"/>
</dbReference>
<dbReference type="PROSITE" id="PS00486">
    <property type="entry name" value="DNA_MISMATCH_REPAIR_2"/>
    <property type="match status" value="1"/>
</dbReference>
<accession>A3ML57</accession>
<gene>
    <name evidence="1" type="primary">mutS</name>
    <name type="ordered locus">BMA10247_1446</name>
</gene>
<keyword id="KW-0067">ATP-binding</keyword>
<keyword id="KW-0227">DNA damage</keyword>
<keyword id="KW-0234">DNA repair</keyword>
<keyword id="KW-0238">DNA-binding</keyword>
<keyword id="KW-0547">Nucleotide-binding</keyword>
<organism>
    <name type="scientific">Burkholderia mallei (strain NCTC 10247)</name>
    <dbReference type="NCBI Taxonomy" id="320389"/>
    <lineage>
        <taxon>Bacteria</taxon>
        <taxon>Pseudomonadati</taxon>
        <taxon>Pseudomonadota</taxon>
        <taxon>Betaproteobacteria</taxon>
        <taxon>Burkholderiales</taxon>
        <taxon>Burkholderiaceae</taxon>
        <taxon>Burkholderia</taxon>
        <taxon>pseudomallei group</taxon>
    </lineage>
</organism>
<sequence>MATQIDASSEAAAATAAAQHTPMMQQYLRIKSEHPDTLVFYRMGDFYELFFEDAEKAARLLDLTLTQRGASAGTPIKMAGVPHHAVEQYLAKLVKFGESAAICEQIGDPATSKGPVERKVVRVVTPGTLTDAALLSDKSDVFLLALCVGHNKRGVASNIGLAWLNLASGALRLAELAPDQLGAALERIRPAEILAADGTIESVPAGMGAITRVPAWHFDIASGTQRLCDQLEVASLDGFGAQALTSANGAAGALLIYAAATQGQQLRHVRSLKVENESEYIGLDPSTRRNLELTETLRGTESPTLYSLLDTCCTAMGSRLLRHWLHHPPRASVAAQARHQAIGALLDAPPNAGLDSLRSALRQIADVERITGRLALLSARPRDLSSLRDTFAALPALRERVAEIASNAAALGRLEAALEPPPGCLDLLTRAIAAEPAAMVRDGGVIARGYDAELDELRDISENCGQFLIDLETRERARTGISNLRVEYNKVHGFYIEVTRGQTDKVPDDYRRRQTLKNAERYITPELKTFEDKALSAQERALARERALYDGVLQALLPHIEGCQRVASGLAELDLLAAFAERARTLDWVAPEFTDEIGIEIDQGRHPVVEAQVEQFIANDCALNPERKLLLITGPNMGGKSTFMRQTALIALMAYVGSYVPAKAARFGPIDRIFTRIGAADDLAGGRSTFMVEMTEAAAILNDATPHSLVLMDEIGRGTSTFDGLALAWAIARHLLSHNRCYTLFATHYFELTQLPAEFPQAANVHLSAVEHGHGIVFLHAVEEGPANQSYGLQVAQLAGVPAPVIRAARKHLAHLEQQSAAQATPQLDLFAAPPVVDEPECNEPPAAATPHPALERLLELDPDDLKPRDALDLLYELHTLARSGPADAQR</sequence>
<proteinExistence type="inferred from homology"/>
<protein>
    <recommendedName>
        <fullName evidence="1">DNA mismatch repair protein MutS</fullName>
    </recommendedName>
</protein>
<feature type="chain" id="PRO_0000335127" description="DNA mismatch repair protein MutS">
    <location>
        <begin position="1"/>
        <end position="891"/>
    </location>
</feature>
<feature type="binding site" evidence="1">
    <location>
        <begin position="634"/>
        <end position="641"/>
    </location>
    <ligand>
        <name>ATP</name>
        <dbReference type="ChEBI" id="CHEBI:30616"/>
    </ligand>
</feature>
<name>MUTS_BURM7</name>
<evidence type="ECO:0000255" key="1">
    <source>
        <dbReference type="HAMAP-Rule" id="MF_00096"/>
    </source>
</evidence>
<evidence type="ECO:0000305" key="2"/>
<comment type="function">
    <text evidence="1">This protein is involved in the repair of mismatches in DNA. It is possible that it carries out the mismatch recognition step. This protein has a weak ATPase activity.</text>
</comment>
<comment type="similarity">
    <text evidence="1">Belongs to the DNA mismatch repair MutS family.</text>
</comment>
<comment type="sequence caution" evidence="2">
    <conflict type="erroneous initiation">
        <sequence resource="EMBL-CDS" id="ABO04072"/>
    </conflict>
</comment>
<reference key="1">
    <citation type="journal article" date="2010" name="Genome Biol. Evol.">
        <title>Continuing evolution of Burkholderia mallei through genome reduction and large-scale rearrangements.</title>
        <authorList>
            <person name="Losada L."/>
            <person name="Ronning C.M."/>
            <person name="DeShazer D."/>
            <person name="Woods D."/>
            <person name="Fedorova N."/>
            <person name="Kim H.S."/>
            <person name="Shabalina S.A."/>
            <person name="Pearson T.R."/>
            <person name="Brinkac L."/>
            <person name="Tan P."/>
            <person name="Nandi T."/>
            <person name="Crabtree J."/>
            <person name="Badger J."/>
            <person name="Beckstrom-Sternberg S."/>
            <person name="Saqib M."/>
            <person name="Schutzer S.E."/>
            <person name="Keim P."/>
            <person name="Nierman W.C."/>
        </authorList>
    </citation>
    <scope>NUCLEOTIDE SEQUENCE [LARGE SCALE GENOMIC DNA]</scope>
    <source>
        <strain>NCTC 10247</strain>
    </source>
</reference>